<proteinExistence type="inferred from homology"/>
<sequence length="133" mass="15001">METNKLYECTVIIDGGLQDEPIAEAMAMVQKVITEKGGSIKSVLDIGRRKTAYPINKKTIGYYAHIEFTADTPVIAEIERVLRYEDVLLRYLIIHLTTPLLEMRKRVEKYSVVIGSPEDKAAAEAEASEEEKK</sequence>
<protein>
    <recommendedName>
        <fullName evidence="1">Small ribosomal subunit protein bS6</fullName>
    </recommendedName>
    <alternativeName>
        <fullName evidence="2">30S ribosomal protein S6</fullName>
    </alternativeName>
</protein>
<name>RS6_CHLPM</name>
<organism>
    <name type="scientific">Chlorobium phaeovibrioides (strain DSM 265 / 1930)</name>
    <name type="common">Prosthecochloris vibrioformis (strain DSM 265)</name>
    <dbReference type="NCBI Taxonomy" id="290318"/>
    <lineage>
        <taxon>Bacteria</taxon>
        <taxon>Pseudomonadati</taxon>
        <taxon>Chlorobiota</taxon>
        <taxon>Chlorobiia</taxon>
        <taxon>Chlorobiales</taxon>
        <taxon>Chlorobiaceae</taxon>
        <taxon>Chlorobium/Pelodictyon group</taxon>
        <taxon>Chlorobium</taxon>
    </lineage>
</organism>
<gene>
    <name evidence="1" type="primary">rpsF</name>
    <name type="ordered locus">Cvib_0181</name>
</gene>
<comment type="function">
    <text evidence="1">Binds together with bS18 to 16S ribosomal RNA.</text>
</comment>
<comment type="similarity">
    <text evidence="1">Belongs to the bacterial ribosomal protein bS6 family.</text>
</comment>
<dbReference type="EMBL" id="CP000607">
    <property type="protein sequence ID" value="ABP36204.1"/>
    <property type="molecule type" value="Genomic_DNA"/>
</dbReference>
<dbReference type="SMR" id="A4SCJ5"/>
<dbReference type="STRING" id="290318.Cvib_0181"/>
<dbReference type="KEGG" id="pvi:Cvib_0181"/>
<dbReference type="eggNOG" id="COG0360">
    <property type="taxonomic scope" value="Bacteria"/>
</dbReference>
<dbReference type="HOGENOM" id="CLU_113441_4_1_10"/>
<dbReference type="OrthoDB" id="9812702at2"/>
<dbReference type="GO" id="GO:0005737">
    <property type="term" value="C:cytoplasm"/>
    <property type="evidence" value="ECO:0007669"/>
    <property type="project" value="UniProtKB-ARBA"/>
</dbReference>
<dbReference type="GO" id="GO:1990904">
    <property type="term" value="C:ribonucleoprotein complex"/>
    <property type="evidence" value="ECO:0007669"/>
    <property type="project" value="UniProtKB-KW"/>
</dbReference>
<dbReference type="GO" id="GO:0005840">
    <property type="term" value="C:ribosome"/>
    <property type="evidence" value="ECO:0007669"/>
    <property type="project" value="UniProtKB-KW"/>
</dbReference>
<dbReference type="GO" id="GO:0070181">
    <property type="term" value="F:small ribosomal subunit rRNA binding"/>
    <property type="evidence" value="ECO:0007669"/>
    <property type="project" value="TreeGrafter"/>
</dbReference>
<dbReference type="GO" id="GO:0003735">
    <property type="term" value="F:structural constituent of ribosome"/>
    <property type="evidence" value="ECO:0007669"/>
    <property type="project" value="InterPro"/>
</dbReference>
<dbReference type="GO" id="GO:0006412">
    <property type="term" value="P:translation"/>
    <property type="evidence" value="ECO:0007669"/>
    <property type="project" value="UniProtKB-UniRule"/>
</dbReference>
<dbReference type="CDD" id="cd00473">
    <property type="entry name" value="bS6"/>
    <property type="match status" value="1"/>
</dbReference>
<dbReference type="Gene3D" id="3.30.70.60">
    <property type="match status" value="1"/>
</dbReference>
<dbReference type="HAMAP" id="MF_00360">
    <property type="entry name" value="Ribosomal_bS6"/>
    <property type="match status" value="1"/>
</dbReference>
<dbReference type="InterPro" id="IPR000529">
    <property type="entry name" value="Ribosomal_bS6"/>
</dbReference>
<dbReference type="InterPro" id="IPR035980">
    <property type="entry name" value="Ribosomal_bS6_sf"/>
</dbReference>
<dbReference type="InterPro" id="IPR020814">
    <property type="entry name" value="Ribosomal_S6_plastid/chlpt"/>
</dbReference>
<dbReference type="InterPro" id="IPR014717">
    <property type="entry name" value="Transl_elong_EF1B/ribsomal_bS6"/>
</dbReference>
<dbReference type="NCBIfam" id="TIGR00166">
    <property type="entry name" value="S6"/>
    <property type="match status" value="1"/>
</dbReference>
<dbReference type="PANTHER" id="PTHR21011">
    <property type="entry name" value="MITOCHONDRIAL 28S RIBOSOMAL PROTEIN S6"/>
    <property type="match status" value="1"/>
</dbReference>
<dbReference type="PANTHER" id="PTHR21011:SF1">
    <property type="entry name" value="SMALL RIBOSOMAL SUBUNIT PROTEIN BS6M"/>
    <property type="match status" value="1"/>
</dbReference>
<dbReference type="Pfam" id="PF01250">
    <property type="entry name" value="Ribosomal_S6"/>
    <property type="match status" value="1"/>
</dbReference>
<dbReference type="SUPFAM" id="SSF54995">
    <property type="entry name" value="Ribosomal protein S6"/>
    <property type="match status" value="1"/>
</dbReference>
<accession>A4SCJ5</accession>
<feature type="chain" id="PRO_1000079458" description="Small ribosomal subunit protein bS6">
    <location>
        <begin position="1"/>
        <end position="133"/>
    </location>
</feature>
<evidence type="ECO:0000255" key="1">
    <source>
        <dbReference type="HAMAP-Rule" id="MF_00360"/>
    </source>
</evidence>
<evidence type="ECO:0000305" key="2"/>
<keyword id="KW-0687">Ribonucleoprotein</keyword>
<keyword id="KW-0689">Ribosomal protein</keyword>
<keyword id="KW-0694">RNA-binding</keyword>
<keyword id="KW-0699">rRNA-binding</keyword>
<reference key="1">
    <citation type="submission" date="2007-03" db="EMBL/GenBank/DDBJ databases">
        <title>Complete sequence of Prosthecochloris vibrioformis DSM 265.</title>
        <authorList>
            <consortium name="US DOE Joint Genome Institute"/>
            <person name="Copeland A."/>
            <person name="Lucas S."/>
            <person name="Lapidus A."/>
            <person name="Barry K."/>
            <person name="Detter J.C."/>
            <person name="Glavina del Rio T."/>
            <person name="Hammon N."/>
            <person name="Israni S."/>
            <person name="Pitluck S."/>
            <person name="Schmutz J."/>
            <person name="Larimer F."/>
            <person name="Land M."/>
            <person name="Hauser L."/>
            <person name="Mikhailova N."/>
            <person name="Li T."/>
            <person name="Overmann J."/>
            <person name="Schuster S.C."/>
            <person name="Bryant D.A."/>
            <person name="Richardson P."/>
        </authorList>
    </citation>
    <scope>NUCLEOTIDE SEQUENCE [LARGE SCALE GENOMIC DNA]</scope>
    <source>
        <strain>DSM 265 / 1930</strain>
    </source>
</reference>